<reference key="1">
    <citation type="journal article" date="1994" name="Biochim. Biophys. Acta">
        <title>Cloning and sequencing of the tuf genes of Streptomyces coelicolor A3(2).</title>
        <authorList>
            <person name="van Wezel G.P."/>
            <person name="Woudt L.P."/>
            <person name="Vervenne R."/>
            <person name="Verdurmen M.L."/>
            <person name="Vijgenboom E."/>
            <person name="Bosch L."/>
        </authorList>
    </citation>
    <scope>NUCLEOTIDE SEQUENCE [GENOMIC DNA]</scope>
    <source>
        <strain>ATCC BAA-471 / A3(2) / M145</strain>
    </source>
</reference>
<reference key="2">
    <citation type="journal article" date="2002" name="Nature">
        <title>Complete genome sequence of the model actinomycete Streptomyces coelicolor A3(2).</title>
        <authorList>
            <person name="Bentley S.D."/>
            <person name="Chater K.F."/>
            <person name="Cerdeno-Tarraga A.-M."/>
            <person name="Challis G.L."/>
            <person name="Thomson N.R."/>
            <person name="James K.D."/>
            <person name="Harris D.E."/>
            <person name="Quail M.A."/>
            <person name="Kieser H."/>
            <person name="Harper D."/>
            <person name="Bateman A."/>
            <person name="Brown S."/>
            <person name="Chandra G."/>
            <person name="Chen C.W."/>
            <person name="Collins M."/>
            <person name="Cronin A."/>
            <person name="Fraser A."/>
            <person name="Goble A."/>
            <person name="Hidalgo J."/>
            <person name="Hornsby T."/>
            <person name="Howarth S."/>
            <person name="Huang C.-H."/>
            <person name="Kieser T."/>
            <person name="Larke L."/>
            <person name="Murphy L.D."/>
            <person name="Oliver K."/>
            <person name="O'Neil S."/>
            <person name="Rabbinowitsch E."/>
            <person name="Rajandream M.A."/>
            <person name="Rutherford K.M."/>
            <person name="Rutter S."/>
            <person name="Seeger K."/>
            <person name="Saunders D."/>
            <person name="Sharp S."/>
            <person name="Squares R."/>
            <person name="Squares S."/>
            <person name="Taylor K."/>
            <person name="Warren T."/>
            <person name="Wietzorrek A."/>
            <person name="Woodward J.R."/>
            <person name="Barrell B.G."/>
            <person name="Parkhill J."/>
            <person name="Hopwood D.A."/>
        </authorList>
    </citation>
    <scope>NUCLEOTIDE SEQUENCE [LARGE SCALE GENOMIC DNA]</scope>
    <source>
        <strain>ATCC BAA-471 / A3(2) / M145</strain>
    </source>
</reference>
<name>EFTU3_STRCO</name>
<accession>P40175</accession>
<accession>Q9K412</accession>
<feature type="chain" id="PRO_0000091402" description="Elongation factor Tu-3">
    <location>
        <begin position="1"/>
        <end position="392"/>
    </location>
</feature>
<feature type="domain" description="tr-type G">
    <location>
        <begin position="10"/>
        <end position="206"/>
    </location>
</feature>
<feature type="region of interest" description="G1" evidence="1">
    <location>
        <begin position="19"/>
        <end position="26"/>
    </location>
</feature>
<feature type="region of interest" description="G2" evidence="1">
    <location>
        <begin position="63"/>
        <end position="67"/>
    </location>
</feature>
<feature type="region of interest" description="G3" evidence="1">
    <location>
        <begin position="84"/>
        <end position="87"/>
    </location>
</feature>
<feature type="region of interest" description="G4" evidence="1">
    <location>
        <begin position="139"/>
        <end position="142"/>
    </location>
</feature>
<feature type="region of interest" description="G5" evidence="1">
    <location>
        <begin position="176"/>
        <end position="178"/>
    </location>
</feature>
<feature type="binding site" evidence="2">
    <location>
        <begin position="19"/>
        <end position="26"/>
    </location>
    <ligand>
        <name>GTP</name>
        <dbReference type="ChEBI" id="CHEBI:37565"/>
    </ligand>
</feature>
<feature type="binding site" evidence="2">
    <location>
        <position position="26"/>
    </location>
    <ligand>
        <name>Mg(2+)</name>
        <dbReference type="ChEBI" id="CHEBI:18420"/>
    </ligand>
</feature>
<feature type="binding site" evidence="2">
    <location>
        <begin position="84"/>
        <end position="88"/>
    </location>
    <ligand>
        <name>GTP</name>
        <dbReference type="ChEBI" id="CHEBI:37565"/>
    </ligand>
</feature>
<feature type="binding site" evidence="2">
    <location>
        <begin position="139"/>
        <end position="142"/>
    </location>
    <ligand>
        <name>GTP</name>
        <dbReference type="ChEBI" id="CHEBI:37565"/>
    </ligand>
</feature>
<feature type="sequence conflict" description="In Ref. 1; CAA54330." evidence="3" ref="1">
    <original>R</original>
    <variation>P</variation>
    <location>
        <position position="236"/>
    </location>
</feature>
<dbReference type="EC" id="3.6.5.3" evidence="2"/>
<dbReference type="EMBL" id="X77040">
    <property type="protein sequence ID" value="CAA54330.1"/>
    <property type="molecule type" value="Genomic_DNA"/>
</dbReference>
<dbReference type="EMBL" id="AL939108">
    <property type="protein sequence ID" value="CAB95778.1"/>
    <property type="molecule type" value="Genomic_DNA"/>
</dbReference>
<dbReference type="PIR" id="S50139">
    <property type="entry name" value="S50139"/>
</dbReference>
<dbReference type="RefSeq" id="NP_625606.1">
    <property type="nucleotide sequence ID" value="NC_003888.3"/>
</dbReference>
<dbReference type="SMR" id="P40175"/>
<dbReference type="STRING" id="100226.gene:17758904"/>
<dbReference type="PaxDb" id="100226-SCO1321"/>
<dbReference type="KEGG" id="sco:SCO1321"/>
<dbReference type="PATRIC" id="fig|100226.15.peg.1324"/>
<dbReference type="eggNOG" id="COG0050">
    <property type="taxonomic scope" value="Bacteria"/>
</dbReference>
<dbReference type="HOGENOM" id="CLU_007265_0_0_11"/>
<dbReference type="InParanoid" id="P40175"/>
<dbReference type="OrthoDB" id="9803139at2"/>
<dbReference type="PhylomeDB" id="P40175"/>
<dbReference type="Proteomes" id="UP000001973">
    <property type="component" value="Chromosome"/>
</dbReference>
<dbReference type="GO" id="GO:0005737">
    <property type="term" value="C:cytoplasm"/>
    <property type="evidence" value="ECO:0007669"/>
    <property type="project" value="UniProtKB-SubCell"/>
</dbReference>
<dbReference type="GO" id="GO:0005525">
    <property type="term" value="F:GTP binding"/>
    <property type="evidence" value="ECO:0007669"/>
    <property type="project" value="UniProtKB-UniRule"/>
</dbReference>
<dbReference type="GO" id="GO:0003924">
    <property type="term" value="F:GTPase activity"/>
    <property type="evidence" value="ECO:0007669"/>
    <property type="project" value="InterPro"/>
</dbReference>
<dbReference type="GO" id="GO:0003746">
    <property type="term" value="F:translation elongation factor activity"/>
    <property type="evidence" value="ECO:0000318"/>
    <property type="project" value="GO_Central"/>
</dbReference>
<dbReference type="GO" id="GO:0006414">
    <property type="term" value="P:translational elongation"/>
    <property type="evidence" value="ECO:0000318"/>
    <property type="project" value="GO_Central"/>
</dbReference>
<dbReference type="CDD" id="cd01884">
    <property type="entry name" value="EF_Tu"/>
    <property type="match status" value="1"/>
</dbReference>
<dbReference type="CDD" id="cd03697">
    <property type="entry name" value="EFTU_II"/>
    <property type="match status" value="1"/>
</dbReference>
<dbReference type="CDD" id="cd03707">
    <property type="entry name" value="EFTU_III"/>
    <property type="match status" value="1"/>
</dbReference>
<dbReference type="FunFam" id="2.40.30.10:FF:000085">
    <property type="entry name" value="Elongation factor Tu"/>
    <property type="match status" value="1"/>
</dbReference>
<dbReference type="FunFam" id="2.40.30.10:FF:000124">
    <property type="entry name" value="Elongation factor Tu"/>
    <property type="match status" value="1"/>
</dbReference>
<dbReference type="FunFam" id="3.40.50.300:FF:000576">
    <property type="entry name" value="Elongation factor Tu"/>
    <property type="match status" value="1"/>
</dbReference>
<dbReference type="Gene3D" id="3.40.50.300">
    <property type="entry name" value="P-loop containing nucleotide triphosphate hydrolases"/>
    <property type="match status" value="1"/>
</dbReference>
<dbReference type="Gene3D" id="2.40.30.10">
    <property type="entry name" value="Translation factors"/>
    <property type="match status" value="2"/>
</dbReference>
<dbReference type="HAMAP" id="MF_00118_B">
    <property type="entry name" value="EF_Tu_B"/>
    <property type="match status" value="1"/>
</dbReference>
<dbReference type="InterPro" id="IPR041709">
    <property type="entry name" value="EF-Tu_GTP-bd"/>
</dbReference>
<dbReference type="InterPro" id="IPR050055">
    <property type="entry name" value="EF-Tu_GTPase"/>
</dbReference>
<dbReference type="InterPro" id="IPR004161">
    <property type="entry name" value="EFTu-like_2"/>
</dbReference>
<dbReference type="InterPro" id="IPR033720">
    <property type="entry name" value="EFTU_2"/>
</dbReference>
<dbReference type="InterPro" id="IPR031157">
    <property type="entry name" value="G_TR_CS"/>
</dbReference>
<dbReference type="InterPro" id="IPR027417">
    <property type="entry name" value="P-loop_NTPase"/>
</dbReference>
<dbReference type="InterPro" id="IPR005225">
    <property type="entry name" value="Small_GTP-bd"/>
</dbReference>
<dbReference type="InterPro" id="IPR000795">
    <property type="entry name" value="T_Tr_GTP-bd_dom"/>
</dbReference>
<dbReference type="InterPro" id="IPR009000">
    <property type="entry name" value="Transl_B-barrel_sf"/>
</dbReference>
<dbReference type="InterPro" id="IPR009001">
    <property type="entry name" value="Transl_elong_EF1A/Init_IF2_C"/>
</dbReference>
<dbReference type="InterPro" id="IPR004541">
    <property type="entry name" value="Transl_elong_EFTu/EF1A_bac/org"/>
</dbReference>
<dbReference type="InterPro" id="IPR004160">
    <property type="entry name" value="Transl_elong_EFTu/EF1A_C"/>
</dbReference>
<dbReference type="NCBIfam" id="TIGR00485">
    <property type="entry name" value="EF-Tu"/>
    <property type="match status" value="1"/>
</dbReference>
<dbReference type="NCBIfam" id="NF000766">
    <property type="entry name" value="PRK00049.1"/>
    <property type="match status" value="1"/>
</dbReference>
<dbReference type="NCBIfam" id="NF009372">
    <property type="entry name" value="PRK12735.1"/>
    <property type="match status" value="1"/>
</dbReference>
<dbReference type="NCBIfam" id="NF009373">
    <property type="entry name" value="PRK12736.1"/>
    <property type="match status" value="1"/>
</dbReference>
<dbReference type="NCBIfam" id="TIGR00231">
    <property type="entry name" value="small_GTP"/>
    <property type="match status" value="1"/>
</dbReference>
<dbReference type="PANTHER" id="PTHR43721:SF22">
    <property type="entry name" value="ELONGATION FACTOR TU, MITOCHONDRIAL"/>
    <property type="match status" value="1"/>
</dbReference>
<dbReference type="PANTHER" id="PTHR43721">
    <property type="entry name" value="ELONGATION FACTOR TU-RELATED"/>
    <property type="match status" value="1"/>
</dbReference>
<dbReference type="Pfam" id="PF00009">
    <property type="entry name" value="GTP_EFTU"/>
    <property type="match status" value="1"/>
</dbReference>
<dbReference type="Pfam" id="PF03144">
    <property type="entry name" value="GTP_EFTU_D2"/>
    <property type="match status" value="1"/>
</dbReference>
<dbReference type="Pfam" id="PF03143">
    <property type="entry name" value="GTP_EFTU_D3"/>
    <property type="match status" value="1"/>
</dbReference>
<dbReference type="PRINTS" id="PR00315">
    <property type="entry name" value="ELONGATNFCT"/>
</dbReference>
<dbReference type="SUPFAM" id="SSF50465">
    <property type="entry name" value="EF-Tu/eEF-1alpha/eIF2-gamma C-terminal domain"/>
    <property type="match status" value="1"/>
</dbReference>
<dbReference type="SUPFAM" id="SSF52540">
    <property type="entry name" value="P-loop containing nucleoside triphosphate hydrolases"/>
    <property type="match status" value="1"/>
</dbReference>
<dbReference type="SUPFAM" id="SSF50447">
    <property type="entry name" value="Translation proteins"/>
    <property type="match status" value="1"/>
</dbReference>
<dbReference type="PROSITE" id="PS00301">
    <property type="entry name" value="G_TR_1"/>
    <property type="match status" value="1"/>
</dbReference>
<dbReference type="PROSITE" id="PS51722">
    <property type="entry name" value="G_TR_2"/>
    <property type="match status" value="1"/>
</dbReference>
<sequence length="392" mass="41676">MSKTAYVRTKPHLNIGTMGHVDHGKTTLTAAITKVLAERGAGSTTQYVSFDRIDRAPEEAARGITINIAHVEYETDTRHYAHVDMPGHADYVKNMVTGAAQLDGAILVVSALDGIMPQTAEHVLLARQVGVDHIVVALNKADAGDEELTDLVELEVRELLTAHGYGGDAVPVVRVSGLKALEGDPRWTASVEALLDAVDTYVPMPERYLDAPFLLPVENVLTITGRGTVVTGAVERGTVRVGDRVEVLGASVETVVTGLETFGKPMEEAQAGDNVALLLRGVARDTVRRGQVVAAPGSVVPARRFRARVYVLSAREGGRSTPLTTGYRPQFYIRTADVVGDVDLGEEAVARPGDTVTMTVELGRDVPLETGLGFAIREGGRTVGAGTVTAVE</sequence>
<protein>
    <recommendedName>
        <fullName evidence="2">Elongation factor Tu-3</fullName>
        <shortName evidence="2">EF-Tu-3</shortName>
        <ecNumber evidence="2">3.6.5.3</ecNumber>
    </recommendedName>
</protein>
<organism>
    <name type="scientific">Streptomyces coelicolor (strain ATCC BAA-471 / A3(2) / M145)</name>
    <dbReference type="NCBI Taxonomy" id="100226"/>
    <lineage>
        <taxon>Bacteria</taxon>
        <taxon>Bacillati</taxon>
        <taxon>Actinomycetota</taxon>
        <taxon>Actinomycetes</taxon>
        <taxon>Kitasatosporales</taxon>
        <taxon>Streptomycetaceae</taxon>
        <taxon>Streptomyces</taxon>
        <taxon>Streptomyces albidoflavus group</taxon>
    </lineage>
</organism>
<gene>
    <name evidence="2" type="primary">tuf3</name>
    <name type="ordered locus">SCO1321</name>
    <name type="ORF">2SCG61.03c</name>
</gene>
<keyword id="KW-0963">Cytoplasm</keyword>
<keyword id="KW-0251">Elongation factor</keyword>
<keyword id="KW-0342">GTP-binding</keyword>
<keyword id="KW-0378">Hydrolase</keyword>
<keyword id="KW-0460">Magnesium</keyword>
<keyword id="KW-0479">Metal-binding</keyword>
<keyword id="KW-0547">Nucleotide-binding</keyword>
<keyword id="KW-0648">Protein biosynthesis</keyword>
<keyword id="KW-1185">Reference proteome</keyword>
<proteinExistence type="inferred from homology"/>
<evidence type="ECO:0000250" key="1"/>
<evidence type="ECO:0000255" key="2">
    <source>
        <dbReference type="HAMAP-Rule" id="MF_00118"/>
    </source>
</evidence>
<evidence type="ECO:0000305" key="3"/>
<comment type="function">
    <text evidence="2">GTP hydrolase that promotes the GTP-dependent binding of aminoacyl-tRNA to the A-site of ribosomes during protein biosynthesis.</text>
</comment>
<comment type="catalytic activity">
    <reaction evidence="2">
        <text>GTP + H2O = GDP + phosphate + H(+)</text>
        <dbReference type="Rhea" id="RHEA:19669"/>
        <dbReference type="ChEBI" id="CHEBI:15377"/>
        <dbReference type="ChEBI" id="CHEBI:15378"/>
        <dbReference type="ChEBI" id="CHEBI:37565"/>
        <dbReference type="ChEBI" id="CHEBI:43474"/>
        <dbReference type="ChEBI" id="CHEBI:58189"/>
        <dbReference type="EC" id="3.6.5.3"/>
    </reaction>
    <physiologicalReaction direction="left-to-right" evidence="2">
        <dbReference type="Rhea" id="RHEA:19670"/>
    </physiologicalReaction>
</comment>
<comment type="subunit">
    <text>Monomer.</text>
</comment>
<comment type="subcellular location">
    <subcellularLocation>
        <location evidence="2">Cytoplasm</location>
    </subcellularLocation>
</comment>
<comment type="similarity">
    <text evidence="2">Belongs to the TRAFAC class translation factor GTPase superfamily. Classic translation factor GTPase family. EF-Tu/EF-1A subfamily.</text>
</comment>